<feature type="chain" id="PRO_1000057000" description="DNA gyrase inhibitor YacG">
    <location>
        <begin position="1"/>
        <end position="65"/>
    </location>
</feature>
<feature type="region of interest" description="Disordered" evidence="2">
    <location>
        <begin position="45"/>
        <end position="65"/>
    </location>
</feature>
<feature type="compositionally biased region" description="Acidic residues" evidence="2">
    <location>
        <begin position="54"/>
        <end position="65"/>
    </location>
</feature>
<feature type="binding site" evidence="1">
    <location>
        <position position="9"/>
    </location>
    <ligand>
        <name>Zn(2+)</name>
        <dbReference type="ChEBI" id="CHEBI:29105"/>
    </ligand>
</feature>
<feature type="binding site" evidence="1">
    <location>
        <position position="12"/>
    </location>
    <ligand>
        <name>Zn(2+)</name>
        <dbReference type="ChEBI" id="CHEBI:29105"/>
    </ligand>
</feature>
<feature type="binding site" evidence="1">
    <location>
        <position position="28"/>
    </location>
    <ligand>
        <name>Zn(2+)</name>
        <dbReference type="ChEBI" id="CHEBI:29105"/>
    </ligand>
</feature>
<feature type="binding site" evidence="1">
    <location>
        <position position="32"/>
    </location>
    <ligand>
        <name>Zn(2+)</name>
        <dbReference type="ChEBI" id="CHEBI:29105"/>
    </ligand>
</feature>
<gene>
    <name evidence="1" type="primary">yacG</name>
    <name type="ordered locus">SSON_0109</name>
</gene>
<keyword id="KW-0479">Metal-binding</keyword>
<keyword id="KW-1185">Reference proteome</keyword>
<keyword id="KW-0862">Zinc</keyword>
<organism>
    <name type="scientific">Shigella sonnei (strain Ss046)</name>
    <dbReference type="NCBI Taxonomy" id="300269"/>
    <lineage>
        <taxon>Bacteria</taxon>
        <taxon>Pseudomonadati</taxon>
        <taxon>Pseudomonadota</taxon>
        <taxon>Gammaproteobacteria</taxon>
        <taxon>Enterobacterales</taxon>
        <taxon>Enterobacteriaceae</taxon>
        <taxon>Shigella</taxon>
    </lineage>
</organism>
<sequence length="65" mass="7306">MSETITVNCPTCGKTVVWGEISPFRPFCSKRCQLIDLGEWAAEEKRIPSSGDLSESDDWSEEPKQ</sequence>
<dbReference type="EMBL" id="CP000038">
    <property type="protein sequence ID" value="AAZ86904.1"/>
    <property type="molecule type" value="Genomic_DNA"/>
</dbReference>
<dbReference type="RefSeq" id="WP_000005042.1">
    <property type="nucleotide sequence ID" value="NC_007384.1"/>
</dbReference>
<dbReference type="SMR" id="Q3Z5Q8"/>
<dbReference type="GeneID" id="93777334"/>
<dbReference type="KEGG" id="ssn:SSON_0109"/>
<dbReference type="HOGENOM" id="CLU_178280_3_1_6"/>
<dbReference type="Proteomes" id="UP000002529">
    <property type="component" value="Chromosome"/>
</dbReference>
<dbReference type="GO" id="GO:0008657">
    <property type="term" value="F:DNA topoisomerase type II (double strand cut, ATP-hydrolyzing) inhibitor activity"/>
    <property type="evidence" value="ECO:0007669"/>
    <property type="project" value="UniProtKB-UniRule"/>
</dbReference>
<dbReference type="GO" id="GO:0008270">
    <property type="term" value="F:zinc ion binding"/>
    <property type="evidence" value="ECO:0007669"/>
    <property type="project" value="UniProtKB-UniRule"/>
</dbReference>
<dbReference type="GO" id="GO:0006355">
    <property type="term" value="P:regulation of DNA-templated transcription"/>
    <property type="evidence" value="ECO:0007669"/>
    <property type="project" value="InterPro"/>
</dbReference>
<dbReference type="FunFam" id="3.30.50.10:FF:000026">
    <property type="entry name" value="DNA gyrase inhibitor YacG"/>
    <property type="match status" value="1"/>
</dbReference>
<dbReference type="Gene3D" id="3.30.50.10">
    <property type="entry name" value="Erythroid Transcription Factor GATA-1, subunit A"/>
    <property type="match status" value="1"/>
</dbReference>
<dbReference type="HAMAP" id="MF_00649">
    <property type="entry name" value="DNA_gyrase_inhibitor_YacG"/>
    <property type="match status" value="1"/>
</dbReference>
<dbReference type="InterPro" id="IPR005584">
    <property type="entry name" value="DNA_gyrase_inhibitor_YacG"/>
</dbReference>
<dbReference type="InterPro" id="IPR013088">
    <property type="entry name" value="Znf_NHR/GATA"/>
</dbReference>
<dbReference type="NCBIfam" id="NF001638">
    <property type="entry name" value="PRK00418.1"/>
    <property type="match status" value="1"/>
</dbReference>
<dbReference type="PANTHER" id="PTHR36150">
    <property type="entry name" value="DNA GYRASE INHIBITOR YACG"/>
    <property type="match status" value="1"/>
</dbReference>
<dbReference type="PANTHER" id="PTHR36150:SF1">
    <property type="entry name" value="DNA GYRASE INHIBITOR YACG"/>
    <property type="match status" value="1"/>
</dbReference>
<dbReference type="Pfam" id="PF03884">
    <property type="entry name" value="YacG"/>
    <property type="match status" value="1"/>
</dbReference>
<dbReference type="SUPFAM" id="SSF57716">
    <property type="entry name" value="Glucocorticoid receptor-like (DNA-binding domain)"/>
    <property type="match status" value="1"/>
</dbReference>
<accession>Q3Z5Q8</accession>
<reference key="1">
    <citation type="journal article" date="2005" name="Nucleic Acids Res.">
        <title>Genome dynamics and diversity of Shigella species, the etiologic agents of bacillary dysentery.</title>
        <authorList>
            <person name="Yang F."/>
            <person name="Yang J."/>
            <person name="Zhang X."/>
            <person name="Chen L."/>
            <person name="Jiang Y."/>
            <person name="Yan Y."/>
            <person name="Tang X."/>
            <person name="Wang J."/>
            <person name="Xiong Z."/>
            <person name="Dong J."/>
            <person name="Xue Y."/>
            <person name="Zhu Y."/>
            <person name="Xu X."/>
            <person name="Sun L."/>
            <person name="Chen S."/>
            <person name="Nie H."/>
            <person name="Peng J."/>
            <person name="Xu J."/>
            <person name="Wang Y."/>
            <person name="Yuan Z."/>
            <person name="Wen Y."/>
            <person name="Yao Z."/>
            <person name="Shen Y."/>
            <person name="Qiang B."/>
            <person name="Hou Y."/>
            <person name="Yu J."/>
            <person name="Jin Q."/>
        </authorList>
    </citation>
    <scope>NUCLEOTIDE SEQUENCE [LARGE SCALE GENOMIC DNA]</scope>
    <source>
        <strain>Ss046</strain>
    </source>
</reference>
<comment type="function">
    <text evidence="1">Inhibits all the catalytic activities of DNA gyrase by preventing its interaction with DNA. Acts by binding directly to the C-terminal domain of GyrB, which probably disrupts DNA binding by the gyrase.</text>
</comment>
<comment type="cofactor">
    <cofactor evidence="1">
        <name>Zn(2+)</name>
        <dbReference type="ChEBI" id="CHEBI:29105"/>
    </cofactor>
    <text evidence="1">Binds 1 zinc ion.</text>
</comment>
<comment type="subunit">
    <text evidence="1">Interacts with GyrB.</text>
</comment>
<comment type="similarity">
    <text evidence="1">Belongs to the DNA gyrase inhibitor YacG family.</text>
</comment>
<evidence type="ECO:0000255" key="1">
    <source>
        <dbReference type="HAMAP-Rule" id="MF_00649"/>
    </source>
</evidence>
<evidence type="ECO:0000256" key="2">
    <source>
        <dbReference type="SAM" id="MobiDB-lite"/>
    </source>
</evidence>
<protein>
    <recommendedName>
        <fullName evidence="1">DNA gyrase inhibitor YacG</fullName>
    </recommendedName>
</protein>
<proteinExistence type="inferred from homology"/>
<name>YACG_SHISS</name>